<evidence type="ECO:0000250" key="1"/>
<evidence type="ECO:0000255" key="2"/>
<evidence type="ECO:0000255" key="3">
    <source>
        <dbReference type="PROSITE-ProRule" id="PRU00135"/>
    </source>
</evidence>
<evidence type="ECO:0000255" key="4">
    <source>
        <dbReference type="PROSITE-ProRule" id="PRU00168"/>
    </source>
</evidence>
<evidence type="ECO:0000255" key="5">
    <source>
        <dbReference type="PROSITE-ProRule" id="PRU00226"/>
    </source>
</evidence>
<evidence type="ECO:0000255" key="6">
    <source>
        <dbReference type="PROSITE-ProRule" id="PRU00448"/>
    </source>
</evidence>
<evidence type="ECO:0000256" key="7">
    <source>
        <dbReference type="SAM" id="MobiDB-lite"/>
    </source>
</evidence>
<evidence type="ECO:0000305" key="8"/>
<gene>
    <name type="primary">rasgrp1</name>
</gene>
<dbReference type="EMBL" id="BC136226">
    <property type="protein sequence ID" value="AAI36227.1"/>
    <property type="molecule type" value="mRNA"/>
</dbReference>
<dbReference type="SMR" id="A4IJ06"/>
<dbReference type="FunCoup" id="A4IJ06">
    <property type="interactions" value="1428"/>
</dbReference>
<dbReference type="STRING" id="8364.ENSXETP00000052438"/>
<dbReference type="PaxDb" id="8364-ENSXETP00000039215"/>
<dbReference type="eggNOG" id="KOG3417">
    <property type="taxonomic scope" value="Eukaryota"/>
</dbReference>
<dbReference type="InParanoid" id="A4IJ06"/>
<dbReference type="Proteomes" id="UP000008143">
    <property type="component" value="Unplaced"/>
</dbReference>
<dbReference type="GO" id="GO:0005829">
    <property type="term" value="C:cytosol"/>
    <property type="evidence" value="ECO:0007669"/>
    <property type="project" value="UniProtKB-SubCell"/>
</dbReference>
<dbReference type="GO" id="GO:0005789">
    <property type="term" value="C:endoplasmic reticulum membrane"/>
    <property type="evidence" value="ECO:0007669"/>
    <property type="project" value="UniProtKB-SubCell"/>
</dbReference>
<dbReference type="GO" id="GO:0000139">
    <property type="term" value="C:Golgi membrane"/>
    <property type="evidence" value="ECO:0007669"/>
    <property type="project" value="UniProtKB-SubCell"/>
</dbReference>
<dbReference type="GO" id="GO:0005886">
    <property type="term" value="C:plasma membrane"/>
    <property type="evidence" value="ECO:0007669"/>
    <property type="project" value="UniProtKB-SubCell"/>
</dbReference>
<dbReference type="GO" id="GO:0005509">
    <property type="term" value="F:calcium ion binding"/>
    <property type="evidence" value="ECO:0007669"/>
    <property type="project" value="InterPro"/>
</dbReference>
<dbReference type="GO" id="GO:0005085">
    <property type="term" value="F:guanyl-nucleotide exchange factor activity"/>
    <property type="evidence" value="ECO:0007669"/>
    <property type="project" value="UniProtKB-KW"/>
</dbReference>
<dbReference type="GO" id="GO:0008270">
    <property type="term" value="F:zinc ion binding"/>
    <property type="evidence" value="ECO:0007669"/>
    <property type="project" value="UniProtKB-KW"/>
</dbReference>
<dbReference type="GO" id="GO:0030154">
    <property type="term" value="P:cell differentiation"/>
    <property type="evidence" value="ECO:0007669"/>
    <property type="project" value="UniProtKB-KW"/>
</dbReference>
<dbReference type="GO" id="GO:0007264">
    <property type="term" value="P:small GTPase-mediated signal transduction"/>
    <property type="evidence" value="ECO:0007669"/>
    <property type="project" value="InterPro"/>
</dbReference>
<dbReference type="CDD" id="cd20860">
    <property type="entry name" value="C1_RASGRP1"/>
    <property type="match status" value="1"/>
</dbReference>
<dbReference type="CDD" id="cd22290">
    <property type="entry name" value="cc_RasGRP1_C"/>
    <property type="match status" value="1"/>
</dbReference>
<dbReference type="CDD" id="cd00051">
    <property type="entry name" value="EFh"/>
    <property type="match status" value="1"/>
</dbReference>
<dbReference type="CDD" id="cd00155">
    <property type="entry name" value="RasGEF"/>
    <property type="match status" value="1"/>
</dbReference>
<dbReference type="CDD" id="cd06224">
    <property type="entry name" value="REM"/>
    <property type="match status" value="1"/>
</dbReference>
<dbReference type="FunFam" id="3.30.60.20:FF:000023">
    <property type="entry name" value="RAS guanyl-releasing protein 1 isoform X1"/>
    <property type="match status" value="1"/>
</dbReference>
<dbReference type="FunFam" id="1.10.238.10:FF:000051">
    <property type="entry name" value="Ras guanyl-releasing protein 3 isoform 1"/>
    <property type="match status" value="1"/>
</dbReference>
<dbReference type="FunFam" id="1.10.840.10:FF:000003">
    <property type="entry name" value="Ras guanyl-releasing protein 3 isoform 1"/>
    <property type="match status" value="1"/>
</dbReference>
<dbReference type="Gene3D" id="3.30.60.20">
    <property type="match status" value="1"/>
</dbReference>
<dbReference type="Gene3D" id="6.10.250.2730">
    <property type="match status" value="1"/>
</dbReference>
<dbReference type="Gene3D" id="1.10.238.10">
    <property type="entry name" value="EF-hand"/>
    <property type="match status" value="1"/>
</dbReference>
<dbReference type="Gene3D" id="1.10.840.10">
    <property type="entry name" value="Ras guanine-nucleotide exchange factors catalytic domain"/>
    <property type="match status" value="1"/>
</dbReference>
<dbReference type="Gene3D" id="1.20.870.10">
    <property type="entry name" value="Son of sevenless (SoS) protein Chain: S domain 1"/>
    <property type="match status" value="1"/>
</dbReference>
<dbReference type="InterPro" id="IPR046349">
    <property type="entry name" value="C1-like_sf"/>
</dbReference>
<dbReference type="InterPro" id="IPR020454">
    <property type="entry name" value="DAG/PE-bd"/>
</dbReference>
<dbReference type="InterPro" id="IPR011992">
    <property type="entry name" value="EF-hand-dom_pair"/>
</dbReference>
<dbReference type="InterPro" id="IPR018247">
    <property type="entry name" value="EF_Hand_1_Ca_BS"/>
</dbReference>
<dbReference type="InterPro" id="IPR002048">
    <property type="entry name" value="EF_hand_dom"/>
</dbReference>
<dbReference type="InterPro" id="IPR002219">
    <property type="entry name" value="PE/DAG-bd"/>
</dbReference>
<dbReference type="InterPro" id="IPR008937">
    <property type="entry name" value="Ras-like_GEF"/>
</dbReference>
<dbReference type="InterPro" id="IPR000651">
    <property type="entry name" value="Ras-like_Gua-exchang_fac_N"/>
</dbReference>
<dbReference type="InterPro" id="IPR023578">
    <property type="entry name" value="Ras_GEF_dom_sf"/>
</dbReference>
<dbReference type="InterPro" id="IPR001895">
    <property type="entry name" value="RASGEF_cat_dom"/>
</dbReference>
<dbReference type="InterPro" id="IPR036964">
    <property type="entry name" value="RASGEF_cat_dom_sf"/>
</dbReference>
<dbReference type="PANTHER" id="PTHR23113">
    <property type="entry name" value="GUANINE NUCLEOTIDE EXCHANGE FACTOR"/>
    <property type="match status" value="1"/>
</dbReference>
<dbReference type="PANTHER" id="PTHR23113:SF174">
    <property type="entry name" value="RAS GUANYL-RELEASING PROTEIN 1"/>
    <property type="match status" value="1"/>
</dbReference>
<dbReference type="Pfam" id="PF00130">
    <property type="entry name" value="C1_1"/>
    <property type="match status" value="1"/>
</dbReference>
<dbReference type="Pfam" id="PF00617">
    <property type="entry name" value="RasGEF"/>
    <property type="match status" value="1"/>
</dbReference>
<dbReference type="Pfam" id="PF00618">
    <property type="entry name" value="RasGEF_N"/>
    <property type="match status" value="1"/>
</dbReference>
<dbReference type="PRINTS" id="PR00008">
    <property type="entry name" value="DAGPEDOMAIN"/>
</dbReference>
<dbReference type="SMART" id="SM00109">
    <property type="entry name" value="C1"/>
    <property type="match status" value="1"/>
</dbReference>
<dbReference type="SMART" id="SM00054">
    <property type="entry name" value="EFh"/>
    <property type="match status" value="1"/>
</dbReference>
<dbReference type="SMART" id="SM00147">
    <property type="entry name" value="RasGEF"/>
    <property type="match status" value="1"/>
</dbReference>
<dbReference type="SMART" id="SM00229">
    <property type="entry name" value="RasGEFN"/>
    <property type="match status" value="1"/>
</dbReference>
<dbReference type="SUPFAM" id="SSF57889">
    <property type="entry name" value="Cysteine-rich domain"/>
    <property type="match status" value="1"/>
</dbReference>
<dbReference type="SUPFAM" id="SSF47473">
    <property type="entry name" value="EF-hand"/>
    <property type="match status" value="1"/>
</dbReference>
<dbReference type="SUPFAM" id="SSF48366">
    <property type="entry name" value="Ras GEF"/>
    <property type="match status" value="1"/>
</dbReference>
<dbReference type="PROSITE" id="PS00018">
    <property type="entry name" value="EF_HAND_1"/>
    <property type="match status" value="2"/>
</dbReference>
<dbReference type="PROSITE" id="PS50222">
    <property type="entry name" value="EF_HAND_2"/>
    <property type="match status" value="2"/>
</dbReference>
<dbReference type="PROSITE" id="PS50009">
    <property type="entry name" value="RASGEF_CAT"/>
    <property type="match status" value="1"/>
</dbReference>
<dbReference type="PROSITE" id="PS50212">
    <property type="entry name" value="RASGEF_NTER"/>
    <property type="match status" value="1"/>
</dbReference>
<dbReference type="PROSITE" id="PS00479">
    <property type="entry name" value="ZF_DAG_PE_1"/>
    <property type="match status" value="1"/>
</dbReference>
<dbReference type="PROSITE" id="PS50081">
    <property type="entry name" value="ZF_DAG_PE_2"/>
    <property type="match status" value="1"/>
</dbReference>
<sequence>MGTVGKKKDRPTHGCSTIPKLALELKQIIHSTTHPKVPPVTPLRVMMPLGKLSKGASLDDLIQMCIQAFDLDGNMGQNSELLQIMLTMHGFLLPSTELLMKLRTLYQDALQNRSFSFCLRICYFIRYWVTELWVMFKMDAKLTQAMEEFQELVRSKGEELHWRLIDTAQINSRDWSRKLTQRIKPNCSKKRKVSLLFDHLEPQELAEHLTYLEFKAFRRISFSDYQNYIVSGCVKENPTMERSIALCNGISQWVQFMVLSRPTPQLRAEVLTKFIHVAQKLHQLQNFNTLMAVIGGLCHSSISRLKDTSAHVSHDVNKVLNEMTELLSSCRNYDNYRRVYNECTNFKIPILGVHLKDLIALHEAMPDFLEDSKINVPKLHSLYNHINELIQLQNIAPPLEANMDLVHLLTLSLDLYYTEDEMYELSYAREPRNHRAPPVTPSKPPVVADWASGVSPKPDPKTISKHVQRMVDSVFKNYDLDQDGYISQEEFEKIAASFPFSFCVMDKDREGLISRQEITAYFMRASSICSKLGLGFLHNFQETTYLRPTFCDNCAGFLWGVIKQGYRCKDCGMNCHKQCKELVVFECKKRSKLSVGENSSMFDSGQLEVIPAGGKGQTNDCLGAEEGPYSYPNGDGDIHTEVSKDRTIMLMGSSAQKISVRLQPAVKHRATQTENEPQSLCLQVPSPQRSRTPGLTSHLPISPMPSPCPSPVPTRKKAYAKWENKDSIRKARAELRGGKAGIQELEKEKALLKEENTTLKIQLKDAQRRVETLRAELRKYVLDSDVHQTGS</sequence>
<protein>
    <recommendedName>
        <fullName>RAS guanyl-releasing protein 1</fullName>
    </recommendedName>
</protein>
<organism>
    <name type="scientific">Xenopus tropicalis</name>
    <name type="common">Western clawed frog</name>
    <name type="synonym">Silurana tropicalis</name>
    <dbReference type="NCBI Taxonomy" id="8364"/>
    <lineage>
        <taxon>Eukaryota</taxon>
        <taxon>Metazoa</taxon>
        <taxon>Chordata</taxon>
        <taxon>Craniata</taxon>
        <taxon>Vertebrata</taxon>
        <taxon>Euteleostomi</taxon>
        <taxon>Amphibia</taxon>
        <taxon>Batrachia</taxon>
        <taxon>Anura</taxon>
        <taxon>Pipoidea</taxon>
        <taxon>Pipidae</taxon>
        <taxon>Xenopodinae</taxon>
        <taxon>Xenopus</taxon>
        <taxon>Silurana</taxon>
    </lineage>
</organism>
<name>GRP1_XENTR</name>
<proteinExistence type="evidence at transcript level"/>
<keyword id="KW-0106">Calcium</keyword>
<keyword id="KW-1003">Cell membrane</keyword>
<keyword id="KW-0175">Coiled coil</keyword>
<keyword id="KW-0963">Cytoplasm</keyword>
<keyword id="KW-0221">Differentiation</keyword>
<keyword id="KW-0256">Endoplasmic reticulum</keyword>
<keyword id="KW-0333">Golgi apparatus</keyword>
<keyword id="KW-0344">Guanine-nucleotide releasing factor</keyword>
<keyword id="KW-0472">Membrane</keyword>
<keyword id="KW-0479">Metal-binding</keyword>
<keyword id="KW-1185">Reference proteome</keyword>
<keyword id="KW-0677">Repeat</keyword>
<keyword id="KW-0862">Zinc</keyword>
<keyword id="KW-0863">Zinc-finger</keyword>
<accession>A4IJ06</accession>
<reference key="1">
    <citation type="submission" date="2007-03" db="EMBL/GenBank/DDBJ databases">
        <authorList>
            <consortium name="NIH - Xenopus Gene Collection (XGC) project"/>
        </authorList>
    </citation>
    <scope>NUCLEOTIDE SEQUENCE [LARGE SCALE MRNA]</scope>
    <source>
        <tissue>Brain</tissue>
    </source>
</reference>
<comment type="function">
    <text evidence="1">Functions as a diacylglycerol (DAG)-regulated nucleotide exchange factor specifically activating Ras through the exchange of bound GDP for GTP.</text>
</comment>
<comment type="activity regulation">
    <text evidence="1">Regulated by F-actin polymerization and probably by calcium.</text>
</comment>
<comment type="subcellular location">
    <subcellularLocation>
        <location evidence="1">Cytoplasm</location>
        <location evidence="1">Cytosol</location>
    </subcellularLocation>
    <subcellularLocation>
        <location evidence="1">Cell membrane</location>
        <topology evidence="1">Peripheral membrane protein</topology>
    </subcellularLocation>
    <subcellularLocation>
        <location evidence="1">Golgi apparatus membrane</location>
        <topology evidence="1">Peripheral membrane protein</topology>
    </subcellularLocation>
    <subcellularLocation>
        <location evidence="1">Endoplasmic reticulum membrane</location>
        <topology evidence="1">Peripheral membrane protein</topology>
    </subcellularLocation>
    <text evidence="1">Found both in the cytosol and associated with membranes.</text>
</comment>
<comment type="domain">
    <text evidence="1">The phorbol-ester/DAG-type zinc finger is the principal mediator of the targeting to membranes and is required for functional activation through DAG-binding.</text>
</comment>
<comment type="similarity">
    <text evidence="8">Belongs to the RASGRP family.</text>
</comment>
<feature type="chain" id="PRO_0000316982" description="RAS guanyl-releasing protein 1">
    <location>
        <begin position="1"/>
        <end position="791"/>
    </location>
</feature>
<feature type="domain" description="N-terminal Ras-GEF" evidence="3">
    <location>
        <begin position="49"/>
        <end position="172"/>
    </location>
</feature>
<feature type="domain" description="Ras-GEF" evidence="4">
    <location>
        <begin position="201"/>
        <end position="432"/>
    </location>
</feature>
<feature type="domain" description="EF-hand 1" evidence="6">
    <location>
        <begin position="466"/>
        <end position="501"/>
    </location>
</feature>
<feature type="domain" description="EF-hand 2" evidence="6">
    <location>
        <begin position="502"/>
        <end position="528"/>
    </location>
</feature>
<feature type="zinc finger region" description="Phorbol-ester/DAG-type" evidence="5">
    <location>
        <begin position="537"/>
        <end position="587"/>
    </location>
</feature>
<feature type="region of interest" description="Ras exchanger motif region; required for transforming activity" evidence="1">
    <location>
        <begin position="53"/>
        <end position="106"/>
    </location>
</feature>
<feature type="region of interest" description="Disordered" evidence="7">
    <location>
        <begin position="683"/>
        <end position="715"/>
    </location>
</feature>
<feature type="coiled-coil region" evidence="2">
    <location>
        <begin position="728"/>
        <end position="785"/>
    </location>
</feature>
<feature type="compositionally biased region" description="Polar residues" evidence="7">
    <location>
        <begin position="683"/>
        <end position="695"/>
    </location>
</feature>
<feature type="compositionally biased region" description="Pro residues" evidence="7">
    <location>
        <begin position="702"/>
        <end position="712"/>
    </location>
</feature>
<feature type="binding site" evidence="6">
    <location>
        <position position="479"/>
    </location>
    <ligand>
        <name>Ca(2+)</name>
        <dbReference type="ChEBI" id="CHEBI:29108"/>
        <label>1</label>
    </ligand>
</feature>
<feature type="binding site" evidence="6">
    <location>
        <position position="481"/>
    </location>
    <ligand>
        <name>Ca(2+)</name>
        <dbReference type="ChEBI" id="CHEBI:29108"/>
        <label>1</label>
    </ligand>
</feature>
<feature type="binding site" evidence="6">
    <location>
        <position position="483"/>
    </location>
    <ligand>
        <name>Ca(2+)</name>
        <dbReference type="ChEBI" id="CHEBI:29108"/>
        <label>1</label>
    </ligand>
</feature>
<feature type="binding site" evidence="6">
    <location>
        <position position="485"/>
    </location>
    <ligand>
        <name>Ca(2+)</name>
        <dbReference type="ChEBI" id="CHEBI:29108"/>
        <label>1</label>
    </ligand>
</feature>
<feature type="binding site" evidence="6">
    <location>
        <position position="490"/>
    </location>
    <ligand>
        <name>Ca(2+)</name>
        <dbReference type="ChEBI" id="CHEBI:29108"/>
        <label>1</label>
    </ligand>
</feature>
<feature type="binding site" evidence="6">
    <location>
        <position position="506"/>
    </location>
    <ligand>
        <name>Ca(2+)</name>
        <dbReference type="ChEBI" id="CHEBI:29108"/>
        <label>2</label>
    </ligand>
</feature>
<feature type="binding site" evidence="6">
    <location>
        <position position="508"/>
    </location>
    <ligand>
        <name>Ca(2+)</name>
        <dbReference type="ChEBI" id="CHEBI:29108"/>
        <label>2</label>
    </ligand>
</feature>
<feature type="binding site" evidence="6">
    <location>
        <position position="510"/>
    </location>
    <ligand>
        <name>Ca(2+)</name>
        <dbReference type="ChEBI" id="CHEBI:29108"/>
        <label>2</label>
    </ligand>
</feature>
<feature type="binding site" evidence="6">
    <location>
        <position position="517"/>
    </location>
    <ligand>
        <name>Ca(2+)</name>
        <dbReference type="ChEBI" id="CHEBI:29108"/>
        <label>2</label>
    </ligand>
</feature>